<evidence type="ECO:0000255" key="1">
    <source>
        <dbReference type="HAMAP-Rule" id="MF_00210"/>
    </source>
</evidence>
<comment type="function">
    <text evidence="1">Catalyzes the transfer of the enolpyruvyl moiety of phosphoenolpyruvate (PEP) to the 5-hydroxyl of shikimate-3-phosphate (S3P) to produce enolpyruvyl shikimate-3-phosphate and inorganic phosphate.</text>
</comment>
<comment type="catalytic activity">
    <reaction evidence="1">
        <text>3-phosphoshikimate + phosphoenolpyruvate = 5-O-(1-carboxyvinyl)-3-phosphoshikimate + phosphate</text>
        <dbReference type="Rhea" id="RHEA:21256"/>
        <dbReference type="ChEBI" id="CHEBI:43474"/>
        <dbReference type="ChEBI" id="CHEBI:57701"/>
        <dbReference type="ChEBI" id="CHEBI:58702"/>
        <dbReference type="ChEBI" id="CHEBI:145989"/>
        <dbReference type="EC" id="2.5.1.19"/>
    </reaction>
    <physiologicalReaction direction="left-to-right" evidence="1">
        <dbReference type="Rhea" id="RHEA:21257"/>
    </physiologicalReaction>
</comment>
<comment type="pathway">
    <text evidence="1">Metabolic intermediate biosynthesis; chorismate biosynthesis; chorismate from D-erythrose 4-phosphate and phosphoenolpyruvate: step 6/7.</text>
</comment>
<comment type="subunit">
    <text evidence="1">Monomer.</text>
</comment>
<comment type="subcellular location">
    <subcellularLocation>
        <location evidence="1">Cytoplasm</location>
    </subcellularLocation>
</comment>
<comment type="similarity">
    <text evidence="1">Belongs to the EPSP synthase family.</text>
</comment>
<accession>Q0HV11</accession>
<dbReference type="EC" id="2.5.1.19" evidence="1"/>
<dbReference type="EMBL" id="CP000444">
    <property type="protein sequence ID" value="ABI43044.1"/>
    <property type="molecule type" value="Genomic_DNA"/>
</dbReference>
<dbReference type="SMR" id="Q0HV11"/>
<dbReference type="KEGG" id="shm:Shewmr7_2056"/>
<dbReference type="HOGENOM" id="CLU_024321_0_0_6"/>
<dbReference type="UniPathway" id="UPA00053">
    <property type="reaction ID" value="UER00089"/>
</dbReference>
<dbReference type="GO" id="GO:0005737">
    <property type="term" value="C:cytoplasm"/>
    <property type="evidence" value="ECO:0007669"/>
    <property type="project" value="UniProtKB-SubCell"/>
</dbReference>
<dbReference type="GO" id="GO:0003866">
    <property type="term" value="F:3-phosphoshikimate 1-carboxyvinyltransferase activity"/>
    <property type="evidence" value="ECO:0007669"/>
    <property type="project" value="UniProtKB-UniRule"/>
</dbReference>
<dbReference type="GO" id="GO:0008652">
    <property type="term" value="P:amino acid biosynthetic process"/>
    <property type="evidence" value="ECO:0007669"/>
    <property type="project" value="UniProtKB-KW"/>
</dbReference>
<dbReference type="GO" id="GO:0009073">
    <property type="term" value="P:aromatic amino acid family biosynthetic process"/>
    <property type="evidence" value="ECO:0007669"/>
    <property type="project" value="UniProtKB-KW"/>
</dbReference>
<dbReference type="GO" id="GO:0009423">
    <property type="term" value="P:chorismate biosynthetic process"/>
    <property type="evidence" value="ECO:0007669"/>
    <property type="project" value="UniProtKB-UniRule"/>
</dbReference>
<dbReference type="CDD" id="cd01556">
    <property type="entry name" value="EPSP_synthase"/>
    <property type="match status" value="1"/>
</dbReference>
<dbReference type="FunFam" id="3.65.10.10:FF:000003">
    <property type="entry name" value="3-phosphoshikimate 1-carboxyvinyltransferase"/>
    <property type="match status" value="1"/>
</dbReference>
<dbReference type="FunFam" id="3.65.10.10:FF:000004">
    <property type="entry name" value="3-phosphoshikimate 1-carboxyvinyltransferase"/>
    <property type="match status" value="1"/>
</dbReference>
<dbReference type="Gene3D" id="3.65.10.10">
    <property type="entry name" value="Enolpyruvate transferase domain"/>
    <property type="match status" value="2"/>
</dbReference>
<dbReference type="HAMAP" id="MF_00210">
    <property type="entry name" value="EPSP_synth"/>
    <property type="match status" value="1"/>
</dbReference>
<dbReference type="InterPro" id="IPR001986">
    <property type="entry name" value="Enolpyruvate_Tfrase_dom"/>
</dbReference>
<dbReference type="InterPro" id="IPR036968">
    <property type="entry name" value="Enolpyruvate_Tfrase_sf"/>
</dbReference>
<dbReference type="InterPro" id="IPR006264">
    <property type="entry name" value="EPSP_synthase"/>
</dbReference>
<dbReference type="InterPro" id="IPR023193">
    <property type="entry name" value="EPSP_synthase_CS"/>
</dbReference>
<dbReference type="InterPro" id="IPR013792">
    <property type="entry name" value="RNA3'P_cycl/enolpyr_Trfase_a/b"/>
</dbReference>
<dbReference type="NCBIfam" id="TIGR01356">
    <property type="entry name" value="aroA"/>
    <property type="match status" value="1"/>
</dbReference>
<dbReference type="PANTHER" id="PTHR21090">
    <property type="entry name" value="AROM/DEHYDROQUINATE SYNTHASE"/>
    <property type="match status" value="1"/>
</dbReference>
<dbReference type="PANTHER" id="PTHR21090:SF5">
    <property type="entry name" value="PENTAFUNCTIONAL AROM POLYPEPTIDE"/>
    <property type="match status" value="1"/>
</dbReference>
<dbReference type="Pfam" id="PF00275">
    <property type="entry name" value="EPSP_synthase"/>
    <property type="match status" value="1"/>
</dbReference>
<dbReference type="PIRSF" id="PIRSF000505">
    <property type="entry name" value="EPSPS"/>
    <property type="match status" value="1"/>
</dbReference>
<dbReference type="SUPFAM" id="SSF55205">
    <property type="entry name" value="EPT/RTPC-like"/>
    <property type="match status" value="1"/>
</dbReference>
<dbReference type="PROSITE" id="PS00104">
    <property type="entry name" value="EPSP_SYNTHASE_1"/>
    <property type="match status" value="1"/>
</dbReference>
<dbReference type="PROSITE" id="PS00885">
    <property type="entry name" value="EPSP_SYNTHASE_2"/>
    <property type="match status" value="1"/>
</dbReference>
<gene>
    <name evidence="1" type="primary">aroA</name>
    <name type="ordered locus">Shewmr7_2056</name>
</gene>
<sequence length="426" mass="45594">MKQLRLEPVVQVRGEINIPGSKSISNRALLLATLAKGTTTLTNLLDSDDIRHMLASLKQLGVGYRLSQNNTVCELTGLGGAISADTAQTLFLGNAGTAMRPLCAALTLGRGEFTLTGEPRMEERPIGDLVDALKQLGANIMYLKNEGFPPLTINATGLNGGDVEIAGDLSSQFLTALLMVAPLAKGSVNIHVKGELVSKPYIDITLALMAQFGVQVINHDYARFEILAGQQYVSPGKVLVEGDASSASYFLAAGAIKGGEVKVTGVGRLSIQGDVKFADVLEKMGADIEWGDDYIIARGAPLTAVDLDMNHIPDAAMTIATAALFAKGTTTIRNIYNWRIKETDRLAAMATELRKVGALVEEGHDYIQITPPAVLNTAEIDTYNDHRMAMCFSMMAFADCGITINDPDCTSKTFPDYFAQFASLKA</sequence>
<feature type="chain" id="PRO_1000012476" description="3-phosphoshikimate 1-carboxyvinyltransferase">
    <location>
        <begin position="1"/>
        <end position="426"/>
    </location>
</feature>
<feature type="active site" description="Proton acceptor" evidence="1">
    <location>
        <position position="314"/>
    </location>
</feature>
<feature type="binding site" evidence="1">
    <location>
        <position position="22"/>
    </location>
    <ligand>
        <name>3-phosphoshikimate</name>
        <dbReference type="ChEBI" id="CHEBI:145989"/>
    </ligand>
</feature>
<feature type="binding site" evidence="1">
    <location>
        <position position="22"/>
    </location>
    <ligand>
        <name>phosphoenolpyruvate</name>
        <dbReference type="ChEBI" id="CHEBI:58702"/>
    </ligand>
</feature>
<feature type="binding site" evidence="1">
    <location>
        <position position="23"/>
    </location>
    <ligand>
        <name>3-phosphoshikimate</name>
        <dbReference type="ChEBI" id="CHEBI:145989"/>
    </ligand>
</feature>
<feature type="binding site" evidence="1">
    <location>
        <position position="27"/>
    </location>
    <ligand>
        <name>3-phosphoshikimate</name>
        <dbReference type="ChEBI" id="CHEBI:145989"/>
    </ligand>
</feature>
<feature type="binding site" evidence="1">
    <location>
        <position position="96"/>
    </location>
    <ligand>
        <name>phosphoenolpyruvate</name>
        <dbReference type="ChEBI" id="CHEBI:58702"/>
    </ligand>
</feature>
<feature type="binding site" evidence="1">
    <location>
        <position position="124"/>
    </location>
    <ligand>
        <name>phosphoenolpyruvate</name>
        <dbReference type="ChEBI" id="CHEBI:58702"/>
    </ligand>
</feature>
<feature type="binding site" evidence="1">
    <location>
        <position position="170"/>
    </location>
    <ligand>
        <name>3-phosphoshikimate</name>
        <dbReference type="ChEBI" id="CHEBI:145989"/>
    </ligand>
</feature>
<feature type="binding site" evidence="1">
    <location>
        <position position="171"/>
    </location>
    <ligand>
        <name>3-phosphoshikimate</name>
        <dbReference type="ChEBI" id="CHEBI:145989"/>
    </ligand>
</feature>
<feature type="binding site" evidence="1">
    <location>
        <position position="172"/>
    </location>
    <ligand>
        <name>3-phosphoshikimate</name>
        <dbReference type="ChEBI" id="CHEBI:145989"/>
    </ligand>
</feature>
<feature type="binding site" evidence="1">
    <location>
        <position position="172"/>
    </location>
    <ligand>
        <name>phosphoenolpyruvate</name>
        <dbReference type="ChEBI" id="CHEBI:58702"/>
    </ligand>
</feature>
<feature type="binding site" evidence="1">
    <location>
        <position position="198"/>
    </location>
    <ligand>
        <name>3-phosphoshikimate</name>
        <dbReference type="ChEBI" id="CHEBI:145989"/>
    </ligand>
</feature>
<feature type="binding site" evidence="1">
    <location>
        <position position="314"/>
    </location>
    <ligand>
        <name>3-phosphoshikimate</name>
        <dbReference type="ChEBI" id="CHEBI:145989"/>
    </ligand>
</feature>
<feature type="binding site" evidence="1">
    <location>
        <position position="337"/>
    </location>
    <ligand>
        <name>3-phosphoshikimate</name>
        <dbReference type="ChEBI" id="CHEBI:145989"/>
    </ligand>
</feature>
<feature type="binding site" evidence="1">
    <location>
        <position position="341"/>
    </location>
    <ligand>
        <name>3-phosphoshikimate</name>
        <dbReference type="ChEBI" id="CHEBI:145989"/>
    </ligand>
</feature>
<feature type="binding site" evidence="1">
    <location>
        <position position="345"/>
    </location>
    <ligand>
        <name>phosphoenolpyruvate</name>
        <dbReference type="ChEBI" id="CHEBI:58702"/>
    </ligand>
</feature>
<feature type="binding site" evidence="1">
    <location>
        <position position="387"/>
    </location>
    <ligand>
        <name>phosphoenolpyruvate</name>
        <dbReference type="ChEBI" id="CHEBI:58702"/>
    </ligand>
</feature>
<feature type="binding site" evidence="1">
    <location>
        <position position="412"/>
    </location>
    <ligand>
        <name>phosphoenolpyruvate</name>
        <dbReference type="ChEBI" id="CHEBI:58702"/>
    </ligand>
</feature>
<protein>
    <recommendedName>
        <fullName evidence="1">3-phosphoshikimate 1-carboxyvinyltransferase</fullName>
        <ecNumber evidence="1">2.5.1.19</ecNumber>
    </recommendedName>
    <alternativeName>
        <fullName evidence="1">5-enolpyruvylshikimate-3-phosphate synthase</fullName>
        <shortName evidence="1">EPSP synthase</shortName>
        <shortName evidence="1">EPSPS</shortName>
    </alternativeName>
</protein>
<proteinExistence type="inferred from homology"/>
<keyword id="KW-0028">Amino-acid biosynthesis</keyword>
<keyword id="KW-0057">Aromatic amino acid biosynthesis</keyword>
<keyword id="KW-0963">Cytoplasm</keyword>
<keyword id="KW-0808">Transferase</keyword>
<reference key="1">
    <citation type="submission" date="2006-08" db="EMBL/GenBank/DDBJ databases">
        <title>Complete sequence of chromosome 1 of Shewanella sp. MR-7.</title>
        <authorList>
            <person name="Copeland A."/>
            <person name="Lucas S."/>
            <person name="Lapidus A."/>
            <person name="Barry K."/>
            <person name="Detter J.C."/>
            <person name="Glavina del Rio T."/>
            <person name="Hammon N."/>
            <person name="Israni S."/>
            <person name="Dalin E."/>
            <person name="Tice H."/>
            <person name="Pitluck S."/>
            <person name="Kiss H."/>
            <person name="Brettin T."/>
            <person name="Bruce D."/>
            <person name="Han C."/>
            <person name="Tapia R."/>
            <person name="Gilna P."/>
            <person name="Schmutz J."/>
            <person name="Larimer F."/>
            <person name="Land M."/>
            <person name="Hauser L."/>
            <person name="Kyrpides N."/>
            <person name="Mikhailova N."/>
            <person name="Nealson K."/>
            <person name="Konstantinidis K."/>
            <person name="Klappenbach J."/>
            <person name="Tiedje J."/>
            <person name="Richardson P."/>
        </authorList>
    </citation>
    <scope>NUCLEOTIDE SEQUENCE [LARGE SCALE GENOMIC DNA]</scope>
    <source>
        <strain>MR-7</strain>
    </source>
</reference>
<organism>
    <name type="scientific">Shewanella sp. (strain MR-7)</name>
    <dbReference type="NCBI Taxonomy" id="60481"/>
    <lineage>
        <taxon>Bacteria</taxon>
        <taxon>Pseudomonadati</taxon>
        <taxon>Pseudomonadota</taxon>
        <taxon>Gammaproteobacteria</taxon>
        <taxon>Alteromonadales</taxon>
        <taxon>Shewanellaceae</taxon>
        <taxon>Shewanella</taxon>
    </lineage>
</organism>
<name>AROA_SHESR</name>